<accession>P0DG78</accession>
<accession>Q878G8</accession>
<accession>Q8K850</accession>
<protein>
    <recommendedName>
        <fullName evidence="1">Putative gluconeogenesis factor</fullName>
    </recommendedName>
</protein>
<gene>
    <name type="ordered locus">SpyM3_0463</name>
</gene>
<name>GNGF_STRP3</name>
<feature type="chain" id="PRO_0000107815" description="Putative gluconeogenesis factor">
    <location>
        <begin position="1"/>
        <end position="325"/>
    </location>
</feature>
<comment type="function">
    <text evidence="1">Required for morphogenesis under gluconeogenic growth conditions.</text>
</comment>
<comment type="subcellular location">
    <subcellularLocation>
        <location evidence="1">Cytoplasm</location>
    </subcellularLocation>
</comment>
<comment type="similarity">
    <text evidence="1">Belongs to the gluconeogenesis factor family.</text>
</comment>
<comment type="sequence caution" evidence="2">
    <conflict type="erroneous initiation">
        <sequence resource="EMBL-CDS" id="AAM79070"/>
    </conflict>
</comment>
<proteinExistence type="inferred from homology"/>
<evidence type="ECO:0000255" key="1">
    <source>
        <dbReference type="HAMAP-Rule" id="MF_00973"/>
    </source>
</evidence>
<evidence type="ECO:0000305" key="2"/>
<organism>
    <name type="scientific">Streptococcus pyogenes serotype M3 (strain ATCC BAA-595 / MGAS315)</name>
    <dbReference type="NCBI Taxonomy" id="198466"/>
    <lineage>
        <taxon>Bacteria</taxon>
        <taxon>Bacillati</taxon>
        <taxon>Bacillota</taxon>
        <taxon>Bacilli</taxon>
        <taxon>Lactobacillales</taxon>
        <taxon>Streptococcaceae</taxon>
        <taxon>Streptococcus</taxon>
    </lineage>
</organism>
<sequence>MKNPKMTVIGGGTGISIILKSLRNEAVDITAVVTVADDGGSSGELRNAMQLAPPGDLRNVLLAMSDMPKFYERVFQYRFNESDGALAGHPLGNLIIAGISEMQGSTYNAIQILTKFFHITGKIYPSSEQALTLHAVFKDGHEVAGESSIAKYQGMIDHVYVTNTYNDQKPQASRKVVEAILESDMIVLGPGSLFTSILPNLVIPEIKEALRQTKAEVVYICNIMTQYGETEQFSDADHVAVLNQHLGRDLIDTVLVNVAKVPQAYMNSNKFDEYLVQVDHDFAGLCRAAKRVISSYFLRLENGGAFHDGNLVVEELMNLVRIVKQ</sequence>
<dbReference type="EMBL" id="AE014074">
    <property type="protein sequence ID" value="AAM79070.1"/>
    <property type="status" value="ALT_INIT"/>
    <property type="molecule type" value="Genomic_DNA"/>
</dbReference>
<dbReference type="RefSeq" id="WP_011017561.1">
    <property type="nucleotide sequence ID" value="NC_004070.1"/>
</dbReference>
<dbReference type="SMR" id="P0DG78"/>
<dbReference type="KEGG" id="spg:SpyM3_0463"/>
<dbReference type="HOGENOM" id="CLU_044041_0_1_9"/>
<dbReference type="Proteomes" id="UP000000564">
    <property type="component" value="Chromosome"/>
</dbReference>
<dbReference type="GO" id="GO:0005737">
    <property type="term" value="C:cytoplasm"/>
    <property type="evidence" value="ECO:0007669"/>
    <property type="project" value="UniProtKB-SubCell"/>
</dbReference>
<dbReference type="GO" id="GO:0043743">
    <property type="term" value="F:LPPG:FO 2-phospho-L-lactate transferase activity"/>
    <property type="evidence" value="ECO:0007669"/>
    <property type="project" value="InterPro"/>
</dbReference>
<dbReference type="GO" id="GO:0008360">
    <property type="term" value="P:regulation of cell shape"/>
    <property type="evidence" value="ECO:0007669"/>
    <property type="project" value="UniProtKB-UniRule"/>
</dbReference>
<dbReference type="CDD" id="cd07044">
    <property type="entry name" value="CofD_YvcK"/>
    <property type="match status" value="1"/>
</dbReference>
<dbReference type="Gene3D" id="3.40.50.10680">
    <property type="entry name" value="CofD-like domains"/>
    <property type="match status" value="1"/>
</dbReference>
<dbReference type="HAMAP" id="MF_00973">
    <property type="entry name" value="Gluconeogen_factor"/>
    <property type="match status" value="1"/>
</dbReference>
<dbReference type="InterPro" id="IPR002882">
    <property type="entry name" value="CofD"/>
</dbReference>
<dbReference type="InterPro" id="IPR038136">
    <property type="entry name" value="CofD-like_dom_sf"/>
</dbReference>
<dbReference type="InterPro" id="IPR010119">
    <property type="entry name" value="Gluconeogen_factor"/>
</dbReference>
<dbReference type="NCBIfam" id="TIGR01826">
    <property type="entry name" value="CofD_related"/>
    <property type="match status" value="1"/>
</dbReference>
<dbReference type="PANTHER" id="PTHR30135:SF3">
    <property type="entry name" value="GLUCONEOGENESIS FACTOR-RELATED"/>
    <property type="match status" value="1"/>
</dbReference>
<dbReference type="PANTHER" id="PTHR30135">
    <property type="entry name" value="UNCHARACTERIZED PROTEIN YVCK-RELATED"/>
    <property type="match status" value="1"/>
</dbReference>
<dbReference type="Pfam" id="PF01933">
    <property type="entry name" value="CofD"/>
    <property type="match status" value="1"/>
</dbReference>
<dbReference type="SUPFAM" id="SSF142338">
    <property type="entry name" value="CofD-like"/>
    <property type="match status" value="1"/>
</dbReference>
<keyword id="KW-0963">Cytoplasm</keyword>
<reference key="1">
    <citation type="journal article" date="2002" name="Proc. Natl. Acad. Sci. U.S.A.">
        <title>Genome sequence of a serotype M3 strain of group A Streptococcus: phage-encoded toxins, the high-virulence phenotype, and clone emergence.</title>
        <authorList>
            <person name="Beres S.B."/>
            <person name="Sylva G.L."/>
            <person name="Barbian K.D."/>
            <person name="Lei B."/>
            <person name="Hoff J.S."/>
            <person name="Mammarella N.D."/>
            <person name="Liu M.-Y."/>
            <person name="Smoot J.C."/>
            <person name="Porcella S.F."/>
            <person name="Parkins L.D."/>
            <person name="Campbell D.S."/>
            <person name="Smith T.M."/>
            <person name="McCormick J.K."/>
            <person name="Leung D.Y.M."/>
            <person name="Schlievert P.M."/>
            <person name="Musser J.M."/>
        </authorList>
    </citation>
    <scope>NUCLEOTIDE SEQUENCE [LARGE SCALE GENOMIC DNA]</scope>
    <source>
        <strain>ATCC BAA-595 / MGAS315</strain>
    </source>
</reference>